<name>CRTQ_STAAN</name>
<comment type="function">
    <text evidence="1">Catalyzes the glycosylation of 4,4'-diaponeurosporenoate, i.e. the esterification of glucose at the C1'' position with the carboxyl group of 4,4'-diaponeurosporenic acid, to form glycosyl-4,4'-diaponeurosporenoate. This is a step in the biosynthesis of staphyloxanthin, an orange pigment present in most staphylococci strains (By similarity).</text>
</comment>
<comment type="pathway">
    <text>Carotenoid biosynthesis; staphyloxanthin biosynthesis; staphyloxanthin from farnesyl diphosphate: step 4/5.</text>
</comment>
<comment type="subcellular location">
    <subcellularLocation>
        <location evidence="3">Cell membrane</location>
        <topology evidence="3">Multi-pass membrane protein</topology>
    </subcellularLocation>
</comment>
<comment type="similarity">
    <text evidence="3">Belongs to the glycosyltransferase 2 family. CrtQ subfamily.</text>
</comment>
<organism>
    <name type="scientific">Staphylococcus aureus (strain N315)</name>
    <dbReference type="NCBI Taxonomy" id="158879"/>
    <lineage>
        <taxon>Bacteria</taxon>
        <taxon>Bacillati</taxon>
        <taxon>Bacillota</taxon>
        <taxon>Bacilli</taxon>
        <taxon>Bacillales</taxon>
        <taxon>Staphylococcaceae</taxon>
        <taxon>Staphylococcus</taxon>
    </lineage>
</organism>
<feature type="chain" id="PRO_0000284864" description="4,4'-diaponeurosporenoate glycosyltransferase">
    <location>
        <begin position="1"/>
        <end position="375"/>
    </location>
</feature>
<feature type="transmembrane region" description="Helical" evidence="2">
    <location>
        <begin position="3"/>
        <end position="23"/>
    </location>
</feature>
<feature type="transmembrane region" description="Helical" evidence="2">
    <location>
        <begin position="164"/>
        <end position="184"/>
    </location>
</feature>
<feature type="transmembrane region" description="Helical" evidence="2">
    <location>
        <begin position="277"/>
        <end position="297"/>
    </location>
</feature>
<feature type="transmembrane region" description="Helical" evidence="2">
    <location>
        <begin position="330"/>
        <end position="350"/>
    </location>
</feature>
<keyword id="KW-0125">Carotenoid biosynthesis</keyword>
<keyword id="KW-1003">Cell membrane</keyword>
<keyword id="KW-0328">Glycosyltransferase</keyword>
<keyword id="KW-0472">Membrane</keyword>
<keyword id="KW-0808">Transferase</keyword>
<keyword id="KW-0812">Transmembrane</keyword>
<keyword id="KW-1133">Transmembrane helix</keyword>
<evidence type="ECO:0000250" key="1"/>
<evidence type="ECO:0000255" key="2"/>
<evidence type="ECO:0000305" key="3"/>
<dbReference type="EC" id="2.4.1.-"/>
<dbReference type="EMBL" id="BA000018">
    <property type="protein sequence ID" value="BAB43654.1"/>
    <property type="molecule type" value="Genomic_DNA"/>
</dbReference>
<dbReference type="PIR" id="D90061">
    <property type="entry name" value="D90061"/>
</dbReference>
<dbReference type="RefSeq" id="WP_000871744.1">
    <property type="nucleotide sequence ID" value="NC_002745.2"/>
</dbReference>
<dbReference type="SMR" id="Q7A3E0"/>
<dbReference type="CAZy" id="GT2">
    <property type="family name" value="Glycosyltransferase Family 2"/>
</dbReference>
<dbReference type="EnsemblBacteria" id="BAB43654">
    <property type="protein sequence ID" value="BAB43654"/>
    <property type="gene ID" value="BAB43654"/>
</dbReference>
<dbReference type="KEGG" id="sau:SA2350"/>
<dbReference type="HOGENOM" id="CLU_038143_1_0_9"/>
<dbReference type="UniPathway" id="UPA00029">
    <property type="reaction ID" value="UER00559"/>
</dbReference>
<dbReference type="GO" id="GO:0005886">
    <property type="term" value="C:plasma membrane"/>
    <property type="evidence" value="ECO:0007669"/>
    <property type="project" value="UniProtKB-SubCell"/>
</dbReference>
<dbReference type="GO" id="GO:0016757">
    <property type="term" value="F:glycosyltransferase activity"/>
    <property type="evidence" value="ECO:0007669"/>
    <property type="project" value="UniProtKB-KW"/>
</dbReference>
<dbReference type="GO" id="GO:0016117">
    <property type="term" value="P:carotenoid biosynthetic process"/>
    <property type="evidence" value="ECO:0007669"/>
    <property type="project" value="UniProtKB-KW"/>
</dbReference>
<dbReference type="CDD" id="cd00761">
    <property type="entry name" value="Glyco_tranf_GTA_type"/>
    <property type="match status" value="1"/>
</dbReference>
<dbReference type="Gene3D" id="3.90.550.10">
    <property type="entry name" value="Spore Coat Polysaccharide Biosynthesis Protein SpsA, Chain A"/>
    <property type="match status" value="1"/>
</dbReference>
<dbReference type="InterPro" id="IPR001173">
    <property type="entry name" value="Glyco_trans_2-like"/>
</dbReference>
<dbReference type="InterPro" id="IPR029044">
    <property type="entry name" value="Nucleotide-diphossugar_trans"/>
</dbReference>
<dbReference type="PANTHER" id="PTHR43646">
    <property type="entry name" value="GLYCOSYLTRANSFERASE"/>
    <property type="match status" value="1"/>
</dbReference>
<dbReference type="PANTHER" id="PTHR43646:SF2">
    <property type="entry name" value="GLYCOSYLTRANSFERASE 2-LIKE DOMAIN-CONTAINING PROTEIN"/>
    <property type="match status" value="1"/>
</dbReference>
<dbReference type="Pfam" id="PF00535">
    <property type="entry name" value="Glycos_transf_2"/>
    <property type="match status" value="1"/>
</dbReference>
<dbReference type="SUPFAM" id="SSF53448">
    <property type="entry name" value="Nucleotide-diphospho-sugar transferases"/>
    <property type="match status" value="1"/>
</dbReference>
<gene>
    <name type="primary">crtQ</name>
    <name type="ordered locus">SA2350</name>
</gene>
<proteinExistence type="evidence at protein level"/>
<sequence>MKWLSRILTVIVTMSMACGALIFNRRHQLKTKTLNFNHKALTIIIPARNEEKRIGHLLHSIIQQQVPVDVIVMNDGSTDETARVARSYGATVVDVVDDTDGKWYGKSHACYQGVTHACTNRIAFVDADVTFLRKDAVETLINQYQLQGEKGLLSVQPYHITKRFYEGFSAIFNLMTVVGMNVFSTLDDGRTNQHAFGPVTLTNKEDYYATGGHKSANRHIIEGFALGSAYTSQSLPVTVYEGFPFVAFRMYQEGFQSLQEGWTKHLSTGAGGTKPKIMTAIVLWLFGSIASILGLCLSLKYRQMSVRKMVALYLSYTTQFIYLHRRVGQFSNLLMVCHPLLFMFFTKIFIQSWKQTHRYGVVEWKGRQYSISKEQ</sequence>
<protein>
    <recommendedName>
        <fullName>4,4'-diaponeurosporenoate glycosyltransferase</fullName>
        <ecNumber>2.4.1.-</ecNumber>
    </recommendedName>
</protein>
<accession>Q7A3E0</accession>
<reference key="1">
    <citation type="journal article" date="2001" name="Lancet">
        <title>Whole genome sequencing of meticillin-resistant Staphylococcus aureus.</title>
        <authorList>
            <person name="Kuroda M."/>
            <person name="Ohta T."/>
            <person name="Uchiyama I."/>
            <person name="Baba T."/>
            <person name="Yuzawa H."/>
            <person name="Kobayashi I."/>
            <person name="Cui L."/>
            <person name="Oguchi A."/>
            <person name="Aoki K."/>
            <person name="Nagai Y."/>
            <person name="Lian J.-Q."/>
            <person name="Ito T."/>
            <person name="Kanamori M."/>
            <person name="Matsumaru H."/>
            <person name="Maruyama A."/>
            <person name="Murakami H."/>
            <person name="Hosoyama A."/>
            <person name="Mizutani-Ui Y."/>
            <person name="Takahashi N.K."/>
            <person name="Sawano T."/>
            <person name="Inoue R."/>
            <person name="Kaito C."/>
            <person name="Sekimizu K."/>
            <person name="Hirakawa H."/>
            <person name="Kuhara S."/>
            <person name="Goto S."/>
            <person name="Yabuzaki J."/>
            <person name="Kanehisa M."/>
            <person name="Yamashita A."/>
            <person name="Oshima K."/>
            <person name="Furuya K."/>
            <person name="Yoshino C."/>
            <person name="Shiba T."/>
            <person name="Hattori M."/>
            <person name="Ogasawara N."/>
            <person name="Hayashi H."/>
            <person name="Hiramatsu K."/>
        </authorList>
    </citation>
    <scope>NUCLEOTIDE SEQUENCE [LARGE SCALE GENOMIC DNA]</scope>
    <source>
        <strain>N315</strain>
    </source>
</reference>
<reference key="2">
    <citation type="submission" date="2007-10" db="UniProtKB">
        <title>Shotgun proteomic analysis of total and membrane protein extracts of S. aureus strain N315.</title>
        <authorList>
            <person name="Vaezzadeh A.R."/>
            <person name="Deshusses J."/>
            <person name="Lescuyer P."/>
            <person name="Hochstrasser D.F."/>
        </authorList>
    </citation>
    <scope>IDENTIFICATION BY MASS SPECTROMETRY [LARGE SCALE ANALYSIS]</scope>
    <source>
        <strain>N315</strain>
    </source>
</reference>